<comment type="function">
    <text evidence="1">This is one of the proteins that bind and probably mediate the attachment of the 5S RNA into the large ribosomal subunit, where it forms part of the central protuberance.</text>
</comment>
<comment type="subunit">
    <text evidence="1">Part of the 50S ribosomal subunit; part of the 5S rRNA/L5/L18/L25 subcomplex. Contacts the 5S and 23S rRNAs.</text>
</comment>
<comment type="similarity">
    <text evidence="1">Belongs to the universal ribosomal protein uL18 family.</text>
</comment>
<gene>
    <name evidence="1" type="primary">rplR</name>
    <name type="ordered locus">GTNG_0121</name>
</gene>
<accession>A4IJK4</accession>
<protein>
    <recommendedName>
        <fullName evidence="1">Large ribosomal subunit protein uL18</fullName>
    </recommendedName>
    <alternativeName>
        <fullName evidence="2">50S ribosomal protein L18</fullName>
    </alternativeName>
</protein>
<evidence type="ECO:0000255" key="1">
    <source>
        <dbReference type="HAMAP-Rule" id="MF_01337"/>
    </source>
</evidence>
<evidence type="ECO:0000305" key="2"/>
<proteinExistence type="inferred from homology"/>
<sequence>MITKVDRNAVRKKRHARIRKKIFGTAERPRLSVFRSNKHIYAQIIDDVKSATIVSASTLDKEFSLDSTNNIDAAKKVGELVAKRALEKGIKQVVFDRGGYLYHGRVKALADAAREAGLEF</sequence>
<reference key="1">
    <citation type="journal article" date="2007" name="Proc. Natl. Acad. Sci. U.S.A.">
        <title>Genome and proteome of long-chain alkane degrading Geobacillus thermodenitrificans NG80-2 isolated from a deep-subsurface oil reservoir.</title>
        <authorList>
            <person name="Feng L."/>
            <person name="Wang W."/>
            <person name="Cheng J."/>
            <person name="Ren Y."/>
            <person name="Zhao G."/>
            <person name="Gao C."/>
            <person name="Tang Y."/>
            <person name="Liu X."/>
            <person name="Han W."/>
            <person name="Peng X."/>
            <person name="Liu R."/>
            <person name="Wang L."/>
        </authorList>
    </citation>
    <scope>NUCLEOTIDE SEQUENCE [LARGE SCALE GENOMIC DNA]</scope>
    <source>
        <strain>NG80-2</strain>
    </source>
</reference>
<feature type="chain" id="PRO_1000053030" description="Large ribosomal subunit protein uL18">
    <location>
        <begin position="1"/>
        <end position="120"/>
    </location>
</feature>
<organism>
    <name type="scientific">Geobacillus thermodenitrificans (strain NG80-2)</name>
    <dbReference type="NCBI Taxonomy" id="420246"/>
    <lineage>
        <taxon>Bacteria</taxon>
        <taxon>Bacillati</taxon>
        <taxon>Bacillota</taxon>
        <taxon>Bacilli</taxon>
        <taxon>Bacillales</taxon>
        <taxon>Anoxybacillaceae</taxon>
        <taxon>Geobacillus</taxon>
    </lineage>
</organism>
<keyword id="KW-0687">Ribonucleoprotein</keyword>
<keyword id="KW-0689">Ribosomal protein</keyword>
<keyword id="KW-0694">RNA-binding</keyword>
<keyword id="KW-0699">rRNA-binding</keyword>
<dbReference type="EMBL" id="CP000557">
    <property type="protein sequence ID" value="ABO65508.1"/>
    <property type="molecule type" value="Genomic_DNA"/>
</dbReference>
<dbReference type="RefSeq" id="WP_008881929.1">
    <property type="nucleotide sequence ID" value="NC_009328.1"/>
</dbReference>
<dbReference type="SMR" id="A4IJK4"/>
<dbReference type="GeneID" id="87622310"/>
<dbReference type="KEGG" id="gtn:GTNG_0121"/>
<dbReference type="eggNOG" id="COG0256">
    <property type="taxonomic scope" value="Bacteria"/>
</dbReference>
<dbReference type="HOGENOM" id="CLU_098841_0_1_9"/>
<dbReference type="Proteomes" id="UP000001578">
    <property type="component" value="Chromosome"/>
</dbReference>
<dbReference type="GO" id="GO:0022625">
    <property type="term" value="C:cytosolic large ribosomal subunit"/>
    <property type="evidence" value="ECO:0007669"/>
    <property type="project" value="TreeGrafter"/>
</dbReference>
<dbReference type="GO" id="GO:0008097">
    <property type="term" value="F:5S rRNA binding"/>
    <property type="evidence" value="ECO:0007669"/>
    <property type="project" value="TreeGrafter"/>
</dbReference>
<dbReference type="GO" id="GO:0003735">
    <property type="term" value="F:structural constituent of ribosome"/>
    <property type="evidence" value="ECO:0007669"/>
    <property type="project" value="InterPro"/>
</dbReference>
<dbReference type="GO" id="GO:0006412">
    <property type="term" value="P:translation"/>
    <property type="evidence" value="ECO:0007669"/>
    <property type="project" value="UniProtKB-UniRule"/>
</dbReference>
<dbReference type="CDD" id="cd00432">
    <property type="entry name" value="Ribosomal_L18_L5e"/>
    <property type="match status" value="1"/>
</dbReference>
<dbReference type="FunFam" id="3.30.420.100:FF:000001">
    <property type="entry name" value="50S ribosomal protein L18"/>
    <property type="match status" value="1"/>
</dbReference>
<dbReference type="Gene3D" id="3.30.420.100">
    <property type="match status" value="1"/>
</dbReference>
<dbReference type="HAMAP" id="MF_01337_B">
    <property type="entry name" value="Ribosomal_uL18_B"/>
    <property type="match status" value="1"/>
</dbReference>
<dbReference type="InterPro" id="IPR004389">
    <property type="entry name" value="Ribosomal_uL18_bac-type"/>
</dbReference>
<dbReference type="InterPro" id="IPR005484">
    <property type="entry name" value="Ribosomal_uL18_bac/euk"/>
</dbReference>
<dbReference type="NCBIfam" id="TIGR00060">
    <property type="entry name" value="L18_bact"/>
    <property type="match status" value="1"/>
</dbReference>
<dbReference type="PANTHER" id="PTHR12899">
    <property type="entry name" value="39S RIBOSOMAL PROTEIN L18, MITOCHONDRIAL"/>
    <property type="match status" value="1"/>
</dbReference>
<dbReference type="PANTHER" id="PTHR12899:SF3">
    <property type="entry name" value="LARGE RIBOSOMAL SUBUNIT PROTEIN UL18M"/>
    <property type="match status" value="1"/>
</dbReference>
<dbReference type="Pfam" id="PF00861">
    <property type="entry name" value="Ribosomal_L18p"/>
    <property type="match status" value="1"/>
</dbReference>
<dbReference type="SUPFAM" id="SSF53137">
    <property type="entry name" value="Translational machinery components"/>
    <property type="match status" value="1"/>
</dbReference>
<name>RL18_GEOTN</name>